<protein>
    <recommendedName>
        <fullName evidence="1">L-arabinose isomerase</fullName>
        <ecNumber evidence="1">5.3.1.4</ecNumber>
    </recommendedName>
</protein>
<comment type="function">
    <text evidence="1">Catalyzes the conversion of L-arabinose to L-ribulose.</text>
</comment>
<comment type="catalytic activity">
    <reaction evidence="1">
        <text>beta-L-arabinopyranose = L-ribulose</text>
        <dbReference type="Rhea" id="RHEA:14821"/>
        <dbReference type="ChEBI" id="CHEBI:16880"/>
        <dbReference type="ChEBI" id="CHEBI:40886"/>
        <dbReference type="EC" id="5.3.1.4"/>
    </reaction>
</comment>
<comment type="cofactor">
    <cofactor evidence="1">
        <name>Mn(2+)</name>
        <dbReference type="ChEBI" id="CHEBI:29035"/>
    </cofactor>
    <text evidence="1">Binds 1 Mn(2+) ion per subunit.</text>
</comment>
<comment type="pathway">
    <text evidence="1">Carbohydrate degradation; L-arabinose degradation via L-ribulose; D-xylulose 5-phosphate from L-arabinose (bacterial route): step 1/3.</text>
</comment>
<comment type="similarity">
    <text evidence="1">Belongs to the arabinose isomerase family.</text>
</comment>
<dbReference type="EC" id="5.3.1.4" evidence="1"/>
<dbReference type="EMBL" id="CP000721">
    <property type="protein sequence ID" value="ABR36566.1"/>
    <property type="molecule type" value="Genomic_DNA"/>
</dbReference>
<dbReference type="RefSeq" id="WP_012060613.1">
    <property type="nucleotide sequence ID" value="NC_009617.1"/>
</dbReference>
<dbReference type="SMR" id="A6M1T6"/>
<dbReference type="KEGG" id="cbe:Cbei_4457"/>
<dbReference type="eggNOG" id="COG2160">
    <property type="taxonomic scope" value="Bacteria"/>
</dbReference>
<dbReference type="HOGENOM" id="CLU_045663_0_0_9"/>
<dbReference type="UniPathway" id="UPA00145">
    <property type="reaction ID" value="UER00565"/>
</dbReference>
<dbReference type="Proteomes" id="UP000000565">
    <property type="component" value="Chromosome"/>
</dbReference>
<dbReference type="GO" id="GO:0005829">
    <property type="term" value="C:cytosol"/>
    <property type="evidence" value="ECO:0007669"/>
    <property type="project" value="TreeGrafter"/>
</dbReference>
<dbReference type="GO" id="GO:0008733">
    <property type="term" value="F:L-arabinose isomerase activity"/>
    <property type="evidence" value="ECO:0007669"/>
    <property type="project" value="UniProtKB-UniRule"/>
</dbReference>
<dbReference type="GO" id="GO:0030145">
    <property type="term" value="F:manganese ion binding"/>
    <property type="evidence" value="ECO:0007669"/>
    <property type="project" value="UniProtKB-UniRule"/>
</dbReference>
<dbReference type="GO" id="GO:0019569">
    <property type="term" value="P:L-arabinose catabolic process to xylulose 5-phosphate"/>
    <property type="evidence" value="ECO:0007669"/>
    <property type="project" value="UniProtKB-UniRule"/>
</dbReference>
<dbReference type="CDD" id="cd03557">
    <property type="entry name" value="L-arabinose_isomerase"/>
    <property type="match status" value="1"/>
</dbReference>
<dbReference type="Gene3D" id="3.40.50.10940">
    <property type="match status" value="1"/>
</dbReference>
<dbReference type="HAMAP" id="MF_00519">
    <property type="entry name" value="Arabinose_Isome"/>
    <property type="match status" value="1"/>
</dbReference>
<dbReference type="InterPro" id="IPR024664">
    <property type="entry name" value="Ara_Isoase_C"/>
</dbReference>
<dbReference type="InterPro" id="IPR055390">
    <property type="entry name" value="AraA_central"/>
</dbReference>
<dbReference type="InterPro" id="IPR055389">
    <property type="entry name" value="AraA_N"/>
</dbReference>
<dbReference type="InterPro" id="IPR038583">
    <property type="entry name" value="AraA_N_sf"/>
</dbReference>
<dbReference type="InterPro" id="IPR004216">
    <property type="entry name" value="Fuc/Ara_isomerase_C"/>
</dbReference>
<dbReference type="InterPro" id="IPR009015">
    <property type="entry name" value="Fucose_isomerase_N/cen_sf"/>
</dbReference>
<dbReference type="InterPro" id="IPR003762">
    <property type="entry name" value="Lara_isomerase"/>
</dbReference>
<dbReference type="NCBIfam" id="NF002795">
    <property type="entry name" value="PRK02929.1"/>
    <property type="match status" value="1"/>
</dbReference>
<dbReference type="PANTHER" id="PTHR38464">
    <property type="entry name" value="L-ARABINOSE ISOMERASE"/>
    <property type="match status" value="1"/>
</dbReference>
<dbReference type="PANTHER" id="PTHR38464:SF1">
    <property type="entry name" value="L-ARABINOSE ISOMERASE"/>
    <property type="match status" value="1"/>
</dbReference>
<dbReference type="Pfam" id="PF24856">
    <property type="entry name" value="AraA_central"/>
    <property type="match status" value="1"/>
</dbReference>
<dbReference type="Pfam" id="PF02610">
    <property type="entry name" value="AraA_N"/>
    <property type="match status" value="1"/>
</dbReference>
<dbReference type="Pfam" id="PF11762">
    <property type="entry name" value="Arabinose_Iso_C"/>
    <property type="match status" value="1"/>
</dbReference>
<dbReference type="PIRSF" id="PIRSF001478">
    <property type="entry name" value="L-ara_isomerase"/>
    <property type="match status" value="1"/>
</dbReference>
<dbReference type="SUPFAM" id="SSF50443">
    <property type="entry name" value="FucI/AraA C-terminal domain-like"/>
    <property type="match status" value="1"/>
</dbReference>
<dbReference type="SUPFAM" id="SSF53743">
    <property type="entry name" value="FucI/AraA N-terminal and middle domains"/>
    <property type="match status" value="1"/>
</dbReference>
<gene>
    <name evidence="1" type="primary">araA</name>
    <name type="ordered locus">Cbei_4457</name>
</gene>
<proteinExistence type="inferred from homology"/>
<reference key="1">
    <citation type="submission" date="2007-06" db="EMBL/GenBank/DDBJ databases">
        <title>Complete sequence of Clostridium beijerinckii NCIMB 8052.</title>
        <authorList>
            <consortium name="US DOE Joint Genome Institute"/>
            <person name="Copeland A."/>
            <person name="Lucas S."/>
            <person name="Lapidus A."/>
            <person name="Barry K."/>
            <person name="Detter J.C."/>
            <person name="Glavina del Rio T."/>
            <person name="Hammon N."/>
            <person name="Israni S."/>
            <person name="Dalin E."/>
            <person name="Tice H."/>
            <person name="Pitluck S."/>
            <person name="Sims D."/>
            <person name="Brettin T."/>
            <person name="Bruce D."/>
            <person name="Tapia R."/>
            <person name="Brainard J."/>
            <person name="Schmutz J."/>
            <person name="Larimer F."/>
            <person name="Land M."/>
            <person name="Hauser L."/>
            <person name="Kyrpides N."/>
            <person name="Mikhailova N."/>
            <person name="Bennet G."/>
            <person name="Cann I."/>
            <person name="Chen J.-S."/>
            <person name="Contreras A.L."/>
            <person name="Jones D."/>
            <person name="Kashket E."/>
            <person name="Mitchell W."/>
            <person name="Stoddard S."/>
            <person name="Schwarz W."/>
            <person name="Qureshi N."/>
            <person name="Young M."/>
            <person name="Shi Z."/>
            <person name="Ezeji T."/>
            <person name="White B."/>
            <person name="Blaschek H."/>
            <person name="Richardson P."/>
        </authorList>
    </citation>
    <scope>NUCLEOTIDE SEQUENCE [LARGE SCALE GENOMIC DNA]</scope>
    <source>
        <strain>ATCC 51743 / NCIMB 8052</strain>
    </source>
</reference>
<keyword id="KW-0054">Arabinose catabolism</keyword>
<keyword id="KW-0119">Carbohydrate metabolism</keyword>
<keyword id="KW-0413">Isomerase</keyword>
<keyword id="KW-0464">Manganese</keyword>
<keyword id="KW-0479">Metal-binding</keyword>
<sequence length="489" mass="54313">MLKVKNYEFWFITGSQHLYGPEVIEQVSDNSKIIVDELNKKDLPYKIVFKTVATDSPSIRKVCNDANNDENCAGIITWMHTFSPAKMWIHGLTELRKPLLHLHTQFNKEIPWGTIDMDFMNLNQAAHGDREFGYIGARLDIARKIVVGHWTDASVSADIAKWMAPAVAFTEGHSIKVARFGDNMRNVAVTDGDRIEAQIKFGWIVDYYGVGDLVKSMDAVTEDQIDELMAEYSKLYDIDPKASIDSIREQAKIEIGLRTFLDARGYTAFTTNFEALHGMKQLPGLAVQHLMAEGYGFGAEGDWKTAALLRAMKIMASGKGTGLMEDYTYNMDSENGLILGAHMLEICPTLAATKPVIEVHPLGIGGKEDPARLVFKGASGPAVAASLIDMGNRFRLIVNSVDCVEVTEDMPNLPVASVLWKPQPSLKEGAKAWIMAGGAHHTSFSFYVDEEQLLDWADMVGVECVVINNDTKLSTFKNELKFSSTAWKF</sequence>
<feature type="chain" id="PRO_1000081675" description="L-arabinose isomerase">
    <location>
        <begin position="1"/>
        <end position="489"/>
    </location>
</feature>
<feature type="binding site" evidence="1">
    <location>
        <position position="300"/>
    </location>
    <ligand>
        <name>Mn(2+)</name>
        <dbReference type="ChEBI" id="CHEBI:29035"/>
    </ligand>
</feature>
<feature type="binding site" evidence="1">
    <location>
        <position position="325"/>
    </location>
    <ligand>
        <name>Mn(2+)</name>
        <dbReference type="ChEBI" id="CHEBI:29035"/>
    </ligand>
</feature>
<feature type="binding site" evidence="1">
    <location>
        <position position="342"/>
    </location>
    <ligand>
        <name>Mn(2+)</name>
        <dbReference type="ChEBI" id="CHEBI:29035"/>
    </ligand>
</feature>
<feature type="binding site" evidence="1">
    <location>
        <position position="441"/>
    </location>
    <ligand>
        <name>Mn(2+)</name>
        <dbReference type="ChEBI" id="CHEBI:29035"/>
    </ligand>
</feature>
<accession>A6M1T6</accession>
<evidence type="ECO:0000255" key="1">
    <source>
        <dbReference type="HAMAP-Rule" id="MF_00519"/>
    </source>
</evidence>
<organism>
    <name type="scientific">Clostridium beijerinckii (strain ATCC 51743 / NCIMB 8052)</name>
    <name type="common">Clostridium acetobutylicum</name>
    <dbReference type="NCBI Taxonomy" id="290402"/>
    <lineage>
        <taxon>Bacteria</taxon>
        <taxon>Bacillati</taxon>
        <taxon>Bacillota</taxon>
        <taxon>Clostridia</taxon>
        <taxon>Eubacteriales</taxon>
        <taxon>Clostridiaceae</taxon>
        <taxon>Clostridium</taxon>
    </lineage>
</organism>
<name>ARAA_CLOB8</name>